<reference key="1">
    <citation type="submission" date="2007-11" db="EMBL/GenBank/DDBJ databases">
        <title>The genome sequence of the hyperthermophilic bacterium Thermotoga neapolitana.</title>
        <authorList>
            <person name="Lim S.K."/>
            <person name="Kim J.S."/>
            <person name="Cha S.H."/>
            <person name="Park B.C."/>
            <person name="Lee D.S."/>
            <person name="Tae H.S."/>
            <person name="Kim S.-J."/>
            <person name="Kim J.J."/>
            <person name="Park K.J."/>
            <person name="Lee S.Y."/>
        </authorList>
    </citation>
    <scope>NUCLEOTIDE SEQUENCE [LARGE SCALE GENOMIC DNA]</scope>
    <source>
        <strain>ATCC 49049 / DSM 4359 / NBRC 107923 / NS-E</strain>
    </source>
</reference>
<accession>B9K8F0</accession>
<evidence type="ECO:0000255" key="1">
    <source>
        <dbReference type="HAMAP-Rule" id="MF_00607"/>
    </source>
</evidence>
<gene>
    <name evidence="1" type="primary">rsmA</name>
    <name evidence="1" type="synonym">ksgA</name>
    <name type="ordered locus">CTN_1057</name>
</gene>
<comment type="function">
    <text evidence="1">Specifically dimethylates two adjacent adenosines (A1518 and A1519) in the loop of a conserved hairpin near the 3'-end of 16S rRNA in the 30S particle. May play a critical role in biogenesis of 30S subunits.</text>
</comment>
<comment type="catalytic activity">
    <reaction evidence="1">
        <text>adenosine(1518)/adenosine(1519) in 16S rRNA + 4 S-adenosyl-L-methionine = N(6)-dimethyladenosine(1518)/N(6)-dimethyladenosine(1519) in 16S rRNA + 4 S-adenosyl-L-homocysteine + 4 H(+)</text>
        <dbReference type="Rhea" id="RHEA:19609"/>
        <dbReference type="Rhea" id="RHEA-COMP:10232"/>
        <dbReference type="Rhea" id="RHEA-COMP:10233"/>
        <dbReference type="ChEBI" id="CHEBI:15378"/>
        <dbReference type="ChEBI" id="CHEBI:57856"/>
        <dbReference type="ChEBI" id="CHEBI:59789"/>
        <dbReference type="ChEBI" id="CHEBI:74411"/>
        <dbReference type="ChEBI" id="CHEBI:74493"/>
        <dbReference type="EC" id="2.1.1.182"/>
    </reaction>
</comment>
<comment type="subcellular location">
    <subcellularLocation>
        <location evidence="1">Cytoplasm</location>
    </subcellularLocation>
</comment>
<comment type="similarity">
    <text evidence="1">Belongs to the class I-like SAM-binding methyltransferase superfamily. rRNA adenine N(6)-methyltransferase family. RsmA subfamily.</text>
</comment>
<organism>
    <name type="scientific">Thermotoga neapolitana (strain ATCC 49049 / DSM 4359 / NBRC 107923 / NS-E)</name>
    <dbReference type="NCBI Taxonomy" id="309803"/>
    <lineage>
        <taxon>Bacteria</taxon>
        <taxon>Thermotogati</taxon>
        <taxon>Thermotogota</taxon>
        <taxon>Thermotogae</taxon>
        <taxon>Thermotogales</taxon>
        <taxon>Thermotogaceae</taxon>
        <taxon>Thermotoga</taxon>
    </lineage>
</organism>
<protein>
    <recommendedName>
        <fullName evidence="1">Ribosomal RNA small subunit methyltransferase A</fullName>
        <ecNumber evidence="1">2.1.1.182</ecNumber>
    </recommendedName>
    <alternativeName>
        <fullName evidence="1">16S rRNA (adenine(1518)-N(6)/adenine(1519)-N(6))-dimethyltransferase</fullName>
    </alternativeName>
    <alternativeName>
        <fullName evidence="1">16S rRNA dimethyladenosine transferase</fullName>
    </alternativeName>
    <alternativeName>
        <fullName evidence="1">16S rRNA dimethylase</fullName>
    </alternativeName>
    <alternativeName>
        <fullName evidence="1">S-adenosylmethionine-6-N', N'-adenosyl(rRNA) dimethyltransferase</fullName>
    </alternativeName>
</protein>
<feature type="chain" id="PRO_1000147158" description="Ribosomal RNA small subunit methyltransferase A">
    <location>
        <begin position="1"/>
        <end position="260"/>
    </location>
</feature>
<feature type="binding site" evidence="1">
    <location>
        <position position="23"/>
    </location>
    <ligand>
        <name>S-adenosyl-L-methionine</name>
        <dbReference type="ChEBI" id="CHEBI:59789"/>
    </ligand>
</feature>
<feature type="binding site" evidence="1">
    <location>
        <position position="48"/>
    </location>
    <ligand>
        <name>S-adenosyl-L-methionine</name>
        <dbReference type="ChEBI" id="CHEBI:59789"/>
    </ligand>
</feature>
<feature type="binding site" evidence="1">
    <location>
        <position position="69"/>
    </location>
    <ligand>
        <name>S-adenosyl-L-methionine</name>
        <dbReference type="ChEBI" id="CHEBI:59789"/>
    </ligand>
</feature>
<feature type="binding site" evidence="1">
    <location>
        <position position="94"/>
    </location>
    <ligand>
        <name>S-adenosyl-L-methionine</name>
        <dbReference type="ChEBI" id="CHEBI:59789"/>
    </ligand>
</feature>
<feature type="binding site" evidence="1">
    <location>
        <position position="110"/>
    </location>
    <ligand>
        <name>S-adenosyl-L-methionine</name>
        <dbReference type="ChEBI" id="CHEBI:59789"/>
    </ligand>
</feature>
<proteinExistence type="inferred from homology"/>
<sequence length="260" mass="30036">MKTSDYLKKYGIRLKKHLGQVFLSDDRIAKRIVKEADLKPDDVVVEIGAGAGTLTEELAKTGARVIAYEIDEGLAPILQERLSKYPNVELRFEDFLKARDVPEEAICVSNIPYSVTGPIMEKIIEWRFKKAIVMVQKEVGERILSKPGRKSYGYLSVVVQTFYEVRKLFDVSRSYFVPNPEVDSVVVEMKRKAVEIDFPQFKKFVSMIFSKKRKTLKNNLRPFLSVFEGVDLSRRAEQLSIEEIIELYNIWRRALECSEE</sequence>
<dbReference type="EC" id="2.1.1.182" evidence="1"/>
<dbReference type="EMBL" id="CP000916">
    <property type="protein sequence ID" value="ACM23233.1"/>
    <property type="molecule type" value="Genomic_DNA"/>
</dbReference>
<dbReference type="RefSeq" id="WP_015919549.1">
    <property type="nucleotide sequence ID" value="NC_011978.1"/>
</dbReference>
<dbReference type="SMR" id="B9K8F0"/>
<dbReference type="STRING" id="309803.CTN_1057"/>
<dbReference type="KEGG" id="tna:CTN_1057"/>
<dbReference type="eggNOG" id="COG0030">
    <property type="taxonomic scope" value="Bacteria"/>
</dbReference>
<dbReference type="HOGENOM" id="CLU_041220_0_2_0"/>
<dbReference type="Proteomes" id="UP000000445">
    <property type="component" value="Chromosome"/>
</dbReference>
<dbReference type="GO" id="GO:0005829">
    <property type="term" value="C:cytosol"/>
    <property type="evidence" value="ECO:0007669"/>
    <property type="project" value="TreeGrafter"/>
</dbReference>
<dbReference type="GO" id="GO:0052908">
    <property type="term" value="F:16S rRNA (adenine(1518)-N(6)/adenine(1519)-N(6))-dimethyltransferase activity"/>
    <property type="evidence" value="ECO:0007669"/>
    <property type="project" value="UniProtKB-EC"/>
</dbReference>
<dbReference type="GO" id="GO:0003723">
    <property type="term" value="F:RNA binding"/>
    <property type="evidence" value="ECO:0007669"/>
    <property type="project" value="UniProtKB-KW"/>
</dbReference>
<dbReference type="CDD" id="cd02440">
    <property type="entry name" value="AdoMet_MTases"/>
    <property type="match status" value="1"/>
</dbReference>
<dbReference type="FunFam" id="3.40.50.150:FF:000023">
    <property type="entry name" value="Ribosomal RNA small subunit methyltransferase A"/>
    <property type="match status" value="1"/>
</dbReference>
<dbReference type="Gene3D" id="1.10.8.100">
    <property type="entry name" value="Ribosomal RNA adenine dimethylase-like, domain 2"/>
    <property type="match status" value="1"/>
</dbReference>
<dbReference type="Gene3D" id="3.40.50.150">
    <property type="entry name" value="Vaccinia Virus protein VP39"/>
    <property type="match status" value="1"/>
</dbReference>
<dbReference type="HAMAP" id="MF_00607">
    <property type="entry name" value="16SrRNA_methyltr_A"/>
    <property type="match status" value="1"/>
</dbReference>
<dbReference type="InterPro" id="IPR001737">
    <property type="entry name" value="KsgA/Erm"/>
</dbReference>
<dbReference type="InterPro" id="IPR023165">
    <property type="entry name" value="rRNA_Ade_diMease-like_C"/>
</dbReference>
<dbReference type="InterPro" id="IPR020596">
    <property type="entry name" value="rRNA_Ade_Mease_Trfase_CS"/>
</dbReference>
<dbReference type="InterPro" id="IPR020598">
    <property type="entry name" value="rRNA_Ade_methylase_Trfase_N"/>
</dbReference>
<dbReference type="InterPro" id="IPR011530">
    <property type="entry name" value="rRNA_adenine_dimethylase"/>
</dbReference>
<dbReference type="InterPro" id="IPR029063">
    <property type="entry name" value="SAM-dependent_MTases_sf"/>
</dbReference>
<dbReference type="NCBIfam" id="TIGR00755">
    <property type="entry name" value="ksgA"/>
    <property type="match status" value="1"/>
</dbReference>
<dbReference type="PANTHER" id="PTHR11727">
    <property type="entry name" value="DIMETHYLADENOSINE TRANSFERASE"/>
    <property type="match status" value="1"/>
</dbReference>
<dbReference type="PANTHER" id="PTHR11727:SF7">
    <property type="entry name" value="DIMETHYLADENOSINE TRANSFERASE-RELATED"/>
    <property type="match status" value="1"/>
</dbReference>
<dbReference type="Pfam" id="PF00398">
    <property type="entry name" value="RrnaAD"/>
    <property type="match status" value="1"/>
</dbReference>
<dbReference type="SMART" id="SM00650">
    <property type="entry name" value="rADc"/>
    <property type="match status" value="1"/>
</dbReference>
<dbReference type="SUPFAM" id="SSF53335">
    <property type="entry name" value="S-adenosyl-L-methionine-dependent methyltransferases"/>
    <property type="match status" value="1"/>
</dbReference>
<dbReference type="PROSITE" id="PS01131">
    <property type="entry name" value="RRNA_A_DIMETH"/>
    <property type="match status" value="1"/>
</dbReference>
<dbReference type="PROSITE" id="PS51689">
    <property type="entry name" value="SAM_RNA_A_N6_MT"/>
    <property type="match status" value="1"/>
</dbReference>
<name>RSMA_THENN</name>
<keyword id="KW-0963">Cytoplasm</keyword>
<keyword id="KW-0489">Methyltransferase</keyword>
<keyword id="KW-0694">RNA-binding</keyword>
<keyword id="KW-0698">rRNA processing</keyword>
<keyword id="KW-0949">S-adenosyl-L-methionine</keyword>
<keyword id="KW-0808">Transferase</keyword>